<organism>
    <name type="scientific">Capsicum annuum</name>
    <name type="common">Capsicum pepper</name>
    <dbReference type="NCBI Taxonomy" id="4072"/>
    <lineage>
        <taxon>Eukaryota</taxon>
        <taxon>Viridiplantae</taxon>
        <taxon>Streptophyta</taxon>
        <taxon>Embryophyta</taxon>
        <taxon>Tracheophyta</taxon>
        <taxon>Spermatophyta</taxon>
        <taxon>Magnoliopsida</taxon>
        <taxon>eudicotyledons</taxon>
        <taxon>Gunneridae</taxon>
        <taxon>Pentapetalae</taxon>
        <taxon>asterids</taxon>
        <taxon>lamiids</taxon>
        <taxon>Solanales</taxon>
        <taxon>Solanaceae</taxon>
        <taxon>Solanoideae</taxon>
        <taxon>Capsiceae</taxon>
        <taxon>Capsicum</taxon>
    </lineage>
</organism>
<reference key="1">
    <citation type="journal article" date="2003" name="Int. Arch. Allergy Immunol.">
        <title>Cloning and molecular and immunological characterization of two new food allergens, Cap a 2 and Lyc e 1, profilins from bell pepper (Capsicum annuum) and Tomato (Lycopersicon esculentum).</title>
        <authorList>
            <person name="Willerroider M."/>
            <person name="Fuchs H."/>
            <person name="Ballmer-Weber B."/>
            <person name="Focke M."/>
            <person name="Susani M."/>
            <person name="Thalhamer J."/>
            <person name="Ferreira F."/>
            <person name="Wuethrich B."/>
            <person name="Scheiner O."/>
            <person name="Breiteneder H."/>
            <person name="Hoffman-Sommergruber K."/>
        </authorList>
    </citation>
    <scope>NUCLEOTIDE SEQUENCE [MRNA]</scope>
    <scope>ALLERGEN</scope>
    <source>
        <tissue>Fruit</tissue>
    </source>
</reference>
<keyword id="KW-0009">Actin-binding</keyword>
<keyword id="KW-0020">Allergen</keyword>
<keyword id="KW-0963">Cytoplasm</keyword>
<keyword id="KW-0206">Cytoskeleton</keyword>
<name>PROF_CAPAN</name>
<dbReference type="EMBL" id="AJ417552">
    <property type="protein sequence ID" value="CAD10376.1"/>
    <property type="molecule type" value="mRNA"/>
</dbReference>
<dbReference type="SMR" id="Q93YI9"/>
<dbReference type="Allergome" id="3177">
    <property type="allergen name" value="Cap a 2.0101"/>
</dbReference>
<dbReference type="Allergome" id="689">
    <property type="allergen name" value="Cap a 2"/>
</dbReference>
<dbReference type="EnsemblPlants" id="PHT69404">
    <property type="protein sequence ID" value="PHT69404"/>
    <property type="gene ID" value="T459_28891"/>
</dbReference>
<dbReference type="Gramene" id="PHT69404">
    <property type="protein sequence ID" value="PHT69404"/>
    <property type="gene ID" value="T459_28891"/>
</dbReference>
<dbReference type="OMA" id="CEIDSGH"/>
<dbReference type="GO" id="GO:0005737">
    <property type="term" value="C:cytoplasm"/>
    <property type="evidence" value="ECO:0007669"/>
    <property type="project" value="UniProtKB-KW"/>
</dbReference>
<dbReference type="GO" id="GO:0005856">
    <property type="term" value="C:cytoskeleton"/>
    <property type="evidence" value="ECO:0007669"/>
    <property type="project" value="UniProtKB-SubCell"/>
</dbReference>
<dbReference type="GO" id="GO:0003779">
    <property type="term" value="F:actin binding"/>
    <property type="evidence" value="ECO:0007669"/>
    <property type="project" value="UniProtKB-KW"/>
</dbReference>
<dbReference type="CDD" id="cd00148">
    <property type="entry name" value="PROF"/>
    <property type="match status" value="1"/>
</dbReference>
<dbReference type="FunFam" id="3.30.450.30:FF:000001">
    <property type="entry name" value="Profilin"/>
    <property type="match status" value="1"/>
</dbReference>
<dbReference type="Gene3D" id="3.30.450.30">
    <property type="entry name" value="Dynein light chain 2a, cytoplasmic"/>
    <property type="match status" value="1"/>
</dbReference>
<dbReference type="InterPro" id="IPR048278">
    <property type="entry name" value="PFN"/>
</dbReference>
<dbReference type="InterPro" id="IPR005455">
    <property type="entry name" value="PFN_euk"/>
</dbReference>
<dbReference type="InterPro" id="IPR036140">
    <property type="entry name" value="PFN_sf"/>
</dbReference>
<dbReference type="InterPro" id="IPR027310">
    <property type="entry name" value="Profilin_CS"/>
</dbReference>
<dbReference type="PANTHER" id="PTHR11604">
    <property type="entry name" value="PROFILIN"/>
    <property type="match status" value="1"/>
</dbReference>
<dbReference type="PANTHER" id="PTHR11604:SF59">
    <property type="entry name" value="PROFILIN"/>
    <property type="match status" value="1"/>
</dbReference>
<dbReference type="Pfam" id="PF00235">
    <property type="entry name" value="Profilin"/>
    <property type="match status" value="1"/>
</dbReference>
<dbReference type="PRINTS" id="PR00392">
    <property type="entry name" value="PROFILIN"/>
</dbReference>
<dbReference type="PRINTS" id="PR01640">
    <property type="entry name" value="PROFILINPLNT"/>
</dbReference>
<dbReference type="SMART" id="SM00392">
    <property type="entry name" value="PROF"/>
    <property type="match status" value="1"/>
</dbReference>
<dbReference type="SUPFAM" id="SSF55770">
    <property type="entry name" value="Profilin (actin-binding protein)"/>
    <property type="match status" value="1"/>
</dbReference>
<dbReference type="PROSITE" id="PS00414">
    <property type="entry name" value="PROFILIN"/>
    <property type="match status" value="1"/>
</dbReference>
<comment type="function">
    <text evidence="1">Binds to actin and affects the structure of the cytoskeleton. At high concentrations, profilin prevents the polymerization of actin, whereas it enhances it at low concentrations. By binding to PIP2, it inhibits the formation of IP3 and DG (By similarity).</text>
</comment>
<comment type="subunit">
    <text>Occurs in many kinds of cells as a complex with monomeric actin in a 1:1 ratio.</text>
</comment>
<comment type="subcellular location">
    <subcellularLocation>
        <location evidence="1">Cytoplasm</location>
        <location evidence="1">Cytoskeleton</location>
    </subcellularLocation>
</comment>
<comment type="allergen">
    <text evidence="2">Causes an allergic reaction in human. Binds to IgE. This is a food allergen.</text>
</comment>
<comment type="similarity">
    <text evidence="3">Belongs to the profilin family.</text>
</comment>
<sequence>MSWQTYVDDHLMCEIEGNRLTSAAIIGQDGSVWAQSATFPQFKPEEITAIMNDFAEPGTLAPTGLYLGGTKYMVIQGEAGAVIRGKKGPGGITVKKTNQALIIGIYDEPMTPGQCNMIVERLGDYLIEQSL</sequence>
<protein>
    <recommendedName>
        <fullName>Profilin</fullName>
    </recommendedName>
    <alternativeName>
        <fullName>Minor food allergen Cap a 2</fullName>
    </alternativeName>
    <allergenName>Cap a 2</allergenName>
</protein>
<proteinExistence type="evidence at protein level"/>
<feature type="initiator methionine" description="Removed" evidence="1">
    <location>
        <position position="1"/>
    </location>
</feature>
<feature type="chain" id="PRO_0000199624" description="Profilin">
    <location>
        <begin position="2"/>
        <end position="131"/>
    </location>
</feature>
<accession>Q93YI9</accession>
<evidence type="ECO:0000250" key="1"/>
<evidence type="ECO:0000269" key="2">
    <source>
    </source>
</evidence>
<evidence type="ECO:0000305" key="3"/>